<sequence length="551" mass="59027">MSDIAITISLLALVAVIGLWIGHWKIRGVGLGIGGVLFGGIIVAHFTDQYGLKLDAHTLHFVQEFGLILFVYTIGIQVGPGFFSSLRKSGLKLNAFAILIIVLGSIAVVLVHKIADVPLDIALGIYSGAVTNTPALGAGQQILAELGVPQTTVTMGVSYAMAYPFGICGILLAMWLIRLFFNVKVDDEAARFNAESSQDKESLHNISLKVTNQNLDGLTLIQIPGFSDEEVVCSRLKRDDMEIVPKASTEIRTNDILQLVGDDNSLAKMRLIIGYEVDAPTVAYSGEIRSERVVVTNEKVLGKKIRALGIHQKYGVVISRLNRAGIELVPTGNTTLQFGDVLHMVGRSDVLNQAISVIGNAQQKLLQVQMLPVFIGIGLGVLVGSIPFYIPGFPVALKLGLAGGPLVVVLILARIGTIGKLYWFMPPSANLALREIGIVLFLAVVGLKSGGSFFDTLVNGSGLEWMGYGIFITFVPLIIAGTIARLYGKLNYLTICGLLAGSMTDPPALAFANEIKEDNGAAALSYATVYPLVMFLRIMSPQLLAVLLWAA</sequence>
<proteinExistence type="inferred from homology"/>
<protein>
    <recommendedName>
        <fullName evidence="1">Putative transport protein CGSHiEE_03135</fullName>
    </recommendedName>
</protein>
<dbReference type="EMBL" id="CP000671">
    <property type="protein sequence ID" value="ABQ98054.1"/>
    <property type="molecule type" value="Genomic_DNA"/>
</dbReference>
<dbReference type="SMR" id="A5UBA3"/>
<dbReference type="KEGG" id="hip:CGSHiEE_03135"/>
<dbReference type="HOGENOM" id="CLU_035023_3_1_6"/>
<dbReference type="GO" id="GO:0005886">
    <property type="term" value="C:plasma membrane"/>
    <property type="evidence" value="ECO:0007669"/>
    <property type="project" value="UniProtKB-SubCell"/>
</dbReference>
<dbReference type="GO" id="GO:0008324">
    <property type="term" value="F:monoatomic cation transmembrane transporter activity"/>
    <property type="evidence" value="ECO:0007669"/>
    <property type="project" value="InterPro"/>
</dbReference>
<dbReference type="GO" id="GO:0006813">
    <property type="term" value="P:potassium ion transport"/>
    <property type="evidence" value="ECO:0007669"/>
    <property type="project" value="InterPro"/>
</dbReference>
<dbReference type="Gene3D" id="3.30.70.1450">
    <property type="entry name" value="Regulator of K+ conductance, C-terminal domain"/>
    <property type="match status" value="2"/>
</dbReference>
<dbReference type="HAMAP" id="MF_01016">
    <property type="entry name" value="YidE"/>
    <property type="match status" value="1"/>
</dbReference>
<dbReference type="InterPro" id="IPR050144">
    <property type="entry name" value="AAE_transporter"/>
</dbReference>
<dbReference type="InterPro" id="IPR006037">
    <property type="entry name" value="RCK_C"/>
</dbReference>
<dbReference type="InterPro" id="IPR036721">
    <property type="entry name" value="RCK_C_sf"/>
</dbReference>
<dbReference type="InterPro" id="IPR023018">
    <property type="entry name" value="Transpt_YidE_put"/>
</dbReference>
<dbReference type="InterPro" id="IPR006512">
    <property type="entry name" value="YidE_YbjL"/>
</dbReference>
<dbReference type="NCBIfam" id="NF003007">
    <property type="entry name" value="PRK03818.1"/>
    <property type="match status" value="1"/>
</dbReference>
<dbReference type="NCBIfam" id="TIGR01625">
    <property type="entry name" value="YidE_YbjL_dupl"/>
    <property type="match status" value="2"/>
</dbReference>
<dbReference type="PANTHER" id="PTHR30445">
    <property type="entry name" value="K(+)_H(+) ANTIPORTER SUBUNIT KHTT"/>
    <property type="match status" value="1"/>
</dbReference>
<dbReference type="PANTHER" id="PTHR30445:SF3">
    <property type="entry name" value="TRANSPORT PROTEIN YIDE-RELATED"/>
    <property type="match status" value="1"/>
</dbReference>
<dbReference type="Pfam" id="PF06826">
    <property type="entry name" value="Asp-Al_Ex"/>
    <property type="match status" value="2"/>
</dbReference>
<dbReference type="Pfam" id="PF02080">
    <property type="entry name" value="TrkA_C"/>
    <property type="match status" value="1"/>
</dbReference>
<dbReference type="SUPFAM" id="SSF116726">
    <property type="entry name" value="TrkA C-terminal domain-like"/>
    <property type="match status" value="2"/>
</dbReference>
<dbReference type="PROSITE" id="PS51202">
    <property type="entry name" value="RCK_C"/>
    <property type="match status" value="2"/>
</dbReference>
<accession>A5UBA3</accession>
<keyword id="KW-1003">Cell membrane</keyword>
<keyword id="KW-0472">Membrane</keyword>
<keyword id="KW-0677">Repeat</keyword>
<keyword id="KW-0812">Transmembrane</keyword>
<keyword id="KW-1133">Transmembrane helix</keyword>
<keyword id="KW-0813">Transport</keyword>
<evidence type="ECO:0000255" key="1">
    <source>
        <dbReference type="HAMAP-Rule" id="MF_01016"/>
    </source>
</evidence>
<name>Y3135_HAEIE</name>
<organism>
    <name type="scientific">Haemophilus influenzae (strain PittEE)</name>
    <dbReference type="NCBI Taxonomy" id="374930"/>
    <lineage>
        <taxon>Bacteria</taxon>
        <taxon>Pseudomonadati</taxon>
        <taxon>Pseudomonadota</taxon>
        <taxon>Gammaproteobacteria</taxon>
        <taxon>Pasteurellales</taxon>
        <taxon>Pasteurellaceae</taxon>
        <taxon>Haemophilus</taxon>
    </lineage>
</organism>
<comment type="subcellular location">
    <subcellularLocation>
        <location evidence="1">Cell membrane</location>
        <topology evidence="1">Multi-pass membrane protein</topology>
    </subcellularLocation>
</comment>
<comment type="similarity">
    <text evidence="1">Belongs to the AAE transporter (TC 2.A.81) family. YidE subfamily.</text>
</comment>
<reference key="1">
    <citation type="journal article" date="2007" name="Genome Biol.">
        <title>Characterization and modeling of the Haemophilus influenzae core and supragenomes based on the complete genomic sequences of Rd and 12 clinical nontypeable strains.</title>
        <authorList>
            <person name="Hogg J.S."/>
            <person name="Hu F.Z."/>
            <person name="Janto B."/>
            <person name="Boissy R."/>
            <person name="Hayes J."/>
            <person name="Keefe R."/>
            <person name="Post J.C."/>
            <person name="Ehrlich G.D."/>
        </authorList>
    </citation>
    <scope>NUCLEOTIDE SEQUENCE [LARGE SCALE GENOMIC DNA]</scope>
    <source>
        <strain>PittEE</strain>
    </source>
</reference>
<gene>
    <name type="ordered locus">CGSHiEE_03135</name>
</gene>
<feature type="chain" id="PRO_1000063251" description="Putative transport protein CGSHiEE_03135">
    <location>
        <begin position="1"/>
        <end position="551"/>
    </location>
</feature>
<feature type="transmembrane region" description="Helical" evidence="1">
    <location>
        <begin position="4"/>
        <end position="24"/>
    </location>
</feature>
<feature type="transmembrane region" description="Helical" evidence="1">
    <location>
        <begin position="28"/>
        <end position="48"/>
    </location>
</feature>
<feature type="transmembrane region" description="Helical" evidence="1">
    <location>
        <begin position="65"/>
        <end position="85"/>
    </location>
</feature>
<feature type="transmembrane region" description="Helical" evidence="1">
    <location>
        <begin position="95"/>
        <end position="115"/>
    </location>
</feature>
<feature type="transmembrane region" description="Helical" evidence="1">
    <location>
        <begin position="157"/>
        <end position="177"/>
    </location>
</feature>
<feature type="transmembrane region" description="Helical" evidence="1">
    <location>
        <begin position="370"/>
        <end position="390"/>
    </location>
</feature>
<feature type="transmembrane region" description="Helical" evidence="1">
    <location>
        <begin position="402"/>
        <end position="424"/>
    </location>
</feature>
<feature type="transmembrane region" description="Helical" evidence="1">
    <location>
        <begin position="438"/>
        <end position="458"/>
    </location>
</feature>
<feature type="transmembrane region" description="Helical" evidence="1">
    <location>
        <begin position="463"/>
        <end position="483"/>
    </location>
</feature>
<feature type="transmembrane region" description="Helical" evidence="1">
    <location>
        <begin position="492"/>
        <end position="512"/>
    </location>
</feature>
<feature type="transmembrane region" description="Helical" evidence="1">
    <location>
        <begin position="529"/>
        <end position="549"/>
    </location>
</feature>
<feature type="domain" description="RCK C-terminal 1" evidence="1">
    <location>
        <begin position="191"/>
        <end position="275"/>
    </location>
</feature>
<feature type="domain" description="RCK C-terminal 2" evidence="1">
    <location>
        <begin position="277"/>
        <end position="360"/>
    </location>
</feature>